<feature type="chain" id="PRO_1000090037" description="Probable tRNA sulfurtransferase">
    <location>
        <begin position="1"/>
        <end position="404"/>
    </location>
</feature>
<feature type="domain" description="THUMP" evidence="1">
    <location>
        <begin position="60"/>
        <end position="165"/>
    </location>
</feature>
<feature type="binding site" evidence="1">
    <location>
        <begin position="183"/>
        <end position="184"/>
    </location>
    <ligand>
        <name>ATP</name>
        <dbReference type="ChEBI" id="CHEBI:30616"/>
    </ligand>
</feature>
<feature type="binding site" evidence="1">
    <location>
        <begin position="208"/>
        <end position="209"/>
    </location>
    <ligand>
        <name>ATP</name>
        <dbReference type="ChEBI" id="CHEBI:30616"/>
    </ligand>
</feature>
<feature type="binding site" evidence="1">
    <location>
        <position position="265"/>
    </location>
    <ligand>
        <name>ATP</name>
        <dbReference type="ChEBI" id="CHEBI:30616"/>
    </ligand>
</feature>
<feature type="binding site" evidence="1">
    <location>
        <position position="287"/>
    </location>
    <ligand>
        <name>ATP</name>
        <dbReference type="ChEBI" id="CHEBI:30616"/>
    </ligand>
</feature>
<feature type="binding site" evidence="1">
    <location>
        <position position="296"/>
    </location>
    <ligand>
        <name>ATP</name>
        <dbReference type="ChEBI" id="CHEBI:30616"/>
    </ligand>
</feature>
<keyword id="KW-0067">ATP-binding</keyword>
<keyword id="KW-0963">Cytoplasm</keyword>
<keyword id="KW-0547">Nucleotide-binding</keyword>
<keyword id="KW-0694">RNA-binding</keyword>
<keyword id="KW-0784">Thiamine biosynthesis</keyword>
<keyword id="KW-0808">Transferase</keyword>
<keyword id="KW-0820">tRNA-binding</keyword>
<protein>
    <recommendedName>
        <fullName evidence="1">Probable tRNA sulfurtransferase</fullName>
        <ecNumber evidence="1">2.8.1.4</ecNumber>
    </recommendedName>
    <alternativeName>
        <fullName evidence="1">Sulfur carrier protein ThiS sulfurtransferase</fullName>
    </alternativeName>
    <alternativeName>
        <fullName evidence="1">Thiamine biosynthesis protein ThiI</fullName>
    </alternativeName>
    <alternativeName>
        <fullName evidence="1">tRNA 4-thiouridine synthase</fullName>
    </alternativeName>
</protein>
<comment type="function">
    <text evidence="1">Catalyzes the ATP-dependent transfer of a sulfur to tRNA to produce 4-thiouridine in position 8 of tRNAs, which functions as a near-UV photosensor. Also catalyzes the transfer of sulfur to the sulfur carrier protein ThiS, forming ThiS-thiocarboxylate. This is a step in the synthesis of thiazole, in the thiamine biosynthesis pathway. The sulfur is donated as persulfide by IscS.</text>
</comment>
<comment type="catalytic activity">
    <reaction evidence="1">
        <text>[ThiI sulfur-carrier protein]-S-sulfanyl-L-cysteine + a uridine in tRNA + 2 reduced [2Fe-2S]-[ferredoxin] + ATP + H(+) = [ThiI sulfur-carrier protein]-L-cysteine + a 4-thiouridine in tRNA + 2 oxidized [2Fe-2S]-[ferredoxin] + AMP + diphosphate</text>
        <dbReference type="Rhea" id="RHEA:24176"/>
        <dbReference type="Rhea" id="RHEA-COMP:10000"/>
        <dbReference type="Rhea" id="RHEA-COMP:10001"/>
        <dbReference type="Rhea" id="RHEA-COMP:13337"/>
        <dbReference type="Rhea" id="RHEA-COMP:13338"/>
        <dbReference type="Rhea" id="RHEA-COMP:13339"/>
        <dbReference type="Rhea" id="RHEA-COMP:13340"/>
        <dbReference type="ChEBI" id="CHEBI:15378"/>
        <dbReference type="ChEBI" id="CHEBI:29950"/>
        <dbReference type="ChEBI" id="CHEBI:30616"/>
        <dbReference type="ChEBI" id="CHEBI:33019"/>
        <dbReference type="ChEBI" id="CHEBI:33737"/>
        <dbReference type="ChEBI" id="CHEBI:33738"/>
        <dbReference type="ChEBI" id="CHEBI:61963"/>
        <dbReference type="ChEBI" id="CHEBI:65315"/>
        <dbReference type="ChEBI" id="CHEBI:136798"/>
        <dbReference type="ChEBI" id="CHEBI:456215"/>
        <dbReference type="EC" id="2.8.1.4"/>
    </reaction>
</comment>
<comment type="catalytic activity">
    <reaction evidence="1">
        <text>[ThiS sulfur-carrier protein]-C-terminal Gly-Gly-AMP + S-sulfanyl-L-cysteinyl-[cysteine desulfurase] + AH2 = [ThiS sulfur-carrier protein]-C-terminal-Gly-aminoethanethioate + L-cysteinyl-[cysteine desulfurase] + A + AMP + 2 H(+)</text>
        <dbReference type="Rhea" id="RHEA:43340"/>
        <dbReference type="Rhea" id="RHEA-COMP:12157"/>
        <dbReference type="Rhea" id="RHEA-COMP:12158"/>
        <dbReference type="Rhea" id="RHEA-COMP:12910"/>
        <dbReference type="Rhea" id="RHEA-COMP:19908"/>
        <dbReference type="ChEBI" id="CHEBI:13193"/>
        <dbReference type="ChEBI" id="CHEBI:15378"/>
        <dbReference type="ChEBI" id="CHEBI:17499"/>
        <dbReference type="ChEBI" id="CHEBI:29950"/>
        <dbReference type="ChEBI" id="CHEBI:61963"/>
        <dbReference type="ChEBI" id="CHEBI:90618"/>
        <dbReference type="ChEBI" id="CHEBI:232372"/>
        <dbReference type="ChEBI" id="CHEBI:456215"/>
    </reaction>
</comment>
<comment type="pathway">
    <text evidence="1">Cofactor biosynthesis; thiamine diphosphate biosynthesis.</text>
</comment>
<comment type="subcellular location">
    <subcellularLocation>
        <location evidence="1">Cytoplasm</location>
    </subcellularLocation>
</comment>
<comment type="similarity">
    <text evidence="1">Belongs to the ThiI family.</text>
</comment>
<accession>B5E3Y2</accession>
<dbReference type="EC" id="2.8.1.4" evidence="1"/>
<dbReference type="EMBL" id="CP001015">
    <property type="protein sequence ID" value="ACF56233.1"/>
    <property type="molecule type" value="Genomic_DNA"/>
</dbReference>
<dbReference type="SMR" id="B5E3Y2"/>
<dbReference type="KEGG" id="spx:SPG_0806"/>
<dbReference type="HOGENOM" id="CLU_037952_4_0_9"/>
<dbReference type="UniPathway" id="UPA00060"/>
<dbReference type="GO" id="GO:0005829">
    <property type="term" value="C:cytosol"/>
    <property type="evidence" value="ECO:0007669"/>
    <property type="project" value="TreeGrafter"/>
</dbReference>
<dbReference type="GO" id="GO:0005524">
    <property type="term" value="F:ATP binding"/>
    <property type="evidence" value="ECO:0007669"/>
    <property type="project" value="UniProtKB-UniRule"/>
</dbReference>
<dbReference type="GO" id="GO:0004810">
    <property type="term" value="F:CCA tRNA nucleotidyltransferase activity"/>
    <property type="evidence" value="ECO:0007669"/>
    <property type="project" value="InterPro"/>
</dbReference>
<dbReference type="GO" id="GO:0000049">
    <property type="term" value="F:tRNA binding"/>
    <property type="evidence" value="ECO:0007669"/>
    <property type="project" value="UniProtKB-UniRule"/>
</dbReference>
<dbReference type="GO" id="GO:0140741">
    <property type="term" value="F:tRNA-uracil-4 sulfurtransferase activity"/>
    <property type="evidence" value="ECO:0007669"/>
    <property type="project" value="UniProtKB-EC"/>
</dbReference>
<dbReference type="GO" id="GO:0009228">
    <property type="term" value="P:thiamine biosynthetic process"/>
    <property type="evidence" value="ECO:0007669"/>
    <property type="project" value="UniProtKB-KW"/>
</dbReference>
<dbReference type="GO" id="GO:0009229">
    <property type="term" value="P:thiamine diphosphate biosynthetic process"/>
    <property type="evidence" value="ECO:0007669"/>
    <property type="project" value="UniProtKB-UniRule"/>
</dbReference>
<dbReference type="GO" id="GO:0052837">
    <property type="term" value="P:thiazole biosynthetic process"/>
    <property type="evidence" value="ECO:0007669"/>
    <property type="project" value="TreeGrafter"/>
</dbReference>
<dbReference type="GO" id="GO:0002937">
    <property type="term" value="P:tRNA 4-thiouridine biosynthesis"/>
    <property type="evidence" value="ECO:0007669"/>
    <property type="project" value="TreeGrafter"/>
</dbReference>
<dbReference type="CDD" id="cd01712">
    <property type="entry name" value="PPase_ThiI"/>
    <property type="match status" value="1"/>
</dbReference>
<dbReference type="CDD" id="cd11716">
    <property type="entry name" value="THUMP_ThiI"/>
    <property type="match status" value="1"/>
</dbReference>
<dbReference type="FunFam" id="3.30.2130.30:FF:000006">
    <property type="entry name" value="Probable tRNA sulfurtransferase"/>
    <property type="match status" value="1"/>
</dbReference>
<dbReference type="FunFam" id="3.40.50.620:FF:000053">
    <property type="entry name" value="Probable tRNA sulfurtransferase"/>
    <property type="match status" value="1"/>
</dbReference>
<dbReference type="Gene3D" id="3.30.2130.30">
    <property type="match status" value="1"/>
</dbReference>
<dbReference type="Gene3D" id="3.40.50.620">
    <property type="entry name" value="HUPs"/>
    <property type="match status" value="1"/>
</dbReference>
<dbReference type="HAMAP" id="MF_00021">
    <property type="entry name" value="ThiI"/>
    <property type="match status" value="1"/>
</dbReference>
<dbReference type="InterPro" id="IPR014729">
    <property type="entry name" value="Rossmann-like_a/b/a_fold"/>
</dbReference>
<dbReference type="InterPro" id="IPR020536">
    <property type="entry name" value="ThiI_AANH"/>
</dbReference>
<dbReference type="InterPro" id="IPR054173">
    <property type="entry name" value="ThiI_fer"/>
</dbReference>
<dbReference type="InterPro" id="IPR049961">
    <property type="entry name" value="ThiI_N"/>
</dbReference>
<dbReference type="InterPro" id="IPR004114">
    <property type="entry name" value="THUMP_dom"/>
</dbReference>
<dbReference type="InterPro" id="IPR049962">
    <property type="entry name" value="THUMP_ThiI"/>
</dbReference>
<dbReference type="InterPro" id="IPR003720">
    <property type="entry name" value="tRNA_STrfase"/>
</dbReference>
<dbReference type="InterPro" id="IPR050102">
    <property type="entry name" value="tRNA_sulfurtransferase_ThiI"/>
</dbReference>
<dbReference type="NCBIfam" id="TIGR00342">
    <property type="entry name" value="tRNA uracil 4-sulfurtransferase ThiI"/>
    <property type="match status" value="1"/>
</dbReference>
<dbReference type="PANTHER" id="PTHR43209">
    <property type="entry name" value="TRNA SULFURTRANSFERASE"/>
    <property type="match status" value="1"/>
</dbReference>
<dbReference type="PANTHER" id="PTHR43209:SF1">
    <property type="entry name" value="TRNA SULFURTRANSFERASE"/>
    <property type="match status" value="1"/>
</dbReference>
<dbReference type="Pfam" id="PF02568">
    <property type="entry name" value="ThiI"/>
    <property type="match status" value="1"/>
</dbReference>
<dbReference type="Pfam" id="PF22025">
    <property type="entry name" value="ThiI_fer"/>
    <property type="match status" value="1"/>
</dbReference>
<dbReference type="Pfam" id="PF02926">
    <property type="entry name" value="THUMP"/>
    <property type="match status" value="1"/>
</dbReference>
<dbReference type="SMART" id="SM00981">
    <property type="entry name" value="THUMP"/>
    <property type="match status" value="1"/>
</dbReference>
<dbReference type="SUPFAM" id="SSF52402">
    <property type="entry name" value="Adenine nucleotide alpha hydrolases-like"/>
    <property type="match status" value="1"/>
</dbReference>
<dbReference type="SUPFAM" id="SSF143437">
    <property type="entry name" value="THUMP domain-like"/>
    <property type="match status" value="1"/>
</dbReference>
<dbReference type="PROSITE" id="PS51165">
    <property type="entry name" value="THUMP"/>
    <property type="match status" value="1"/>
</dbReference>
<evidence type="ECO:0000255" key="1">
    <source>
        <dbReference type="HAMAP-Rule" id="MF_00021"/>
    </source>
</evidence>
<gene>
    <name evidence="1" type="primary">thiI</name>
    <name type="ordered locus">SPG_0806</name>
</gene>
<organism>
    <name type="scientific">Streptococcus pneumoniae serotype 19F (strain G54)</name>
    <dbReference type="NCBI Taxonomy" id="512566"/>
    <lineage>
        <taxon>Bacteria</taxon>
        <taxon>Bacillati</taxon>
        <taxon>Bacillota</taxon>
        <taxon>Bacilli</taxon>
        <taxon>Lactobacillales</taxon>
        <taxon>Streptococcaceae</taxon>
        <taxon>Streptococcus</taxon>
    </lineage>
</organism>
<sequence>MQYSEIMIRYGELSTKGKNRMRFINKLRNNISDVLSIYTQVKVTADRDRAHAYLNGADYTAVAESLKQVFGIQNFSPVYKVEKSVEVLKSSVQEIMRDIYKEGMTFKISSKRSDHNFELDSRELNQTLGGAVFEAIPNVQVQMKSPDINLQVEIREEAAYLSYETIRGAGGLPVGTSGKGMLMLSGGIDSPVAGYLALKRGVDIEAVHFASPPYTSPGALKKAQDLTRKLTKFGGNIQFIEVPFTEIQEEIKAKAPEAYLMTLTRRFMMRITDRIREVRNGLVIINGESLGQVASQTLESMKAINAVTNTPIIRPVVTMDKLEIIDIAQEIDTFDISIQPFEDCCTIFAPDRPKTNPKIKNAEQYEARMDVEGLVERAVAGIMITEITPQAEKDEVDDLIDNLL</sequence>
<name>THII_STRP4</name>
<proteinExistence type="inferred from homology"/>
<reference key="1">
    <citation type="journal article" date="2001" name="Microb. Drug Resist.">
        <title>Annotated draft genomic sequence from a Streptococcus pneumoniae type 19F clinical isolate.</title>
        <authorList>
            <person name="Dopazo J."/>
            <person name="Mendoza A."/>
            <person name="Herrero J."/>
            <person name="Caldara F."/>
            <person name="Humbert Y."/>
            <person name="Friedli L."/>
            <person name="Guerrier M."/>
            <person name="Grand-Schenk E."/>
            <person name="Gandin C."/>
            <person name="de Francesco M."/>
            <person name="Polissi A."/>
            <person name="Buell G."/>
            <person name="Feger G."/>
            <person name="Garcia E."/>
            <person name="Peitsch M."/>
            <person name="Garcia-Bustos J.F."/>
        </authorList>
    </citation>
    <scope>NUCLEOTIDE SEQUENCE [LARGE SCALE GENOMIC DNA]</scope>
    <source>
        <strain>G54</strain>
    </source>
</reference>
<reference key="2">
    <citation type="submission" date="2008-03" db="EMBL/GenBank/DDBJ databases">
        <title>Pneumococcal beta glucoside metabolism investigated by whole genome comparison.</title>
        <authorList>
            <person name="Mulas L."/>
            <person name="Trappetti C."/>
            <person name="Hakenbeck R."/>
            <person name="Iannelli F."/>
            <person name="Pozzi G."/>
            <person name="Davidsen T.M."/>
            <person name="Tettelin H."/>
            <person name="Oggioni M."/>
        </authorList>
    </citation>
    <scope>NUCLEOTIDE SEQUENCE [LARGE SCALE GENOMIC DNA]</scope>
    <source>
        <strain>G54</strain>
    </source>
</reference>